<evidence type="ECO:0000255" key="1">
    <source>
        <dbReference type="HAMAP-Rule" id="MF_01131"/>
    </source>
</evidence>
<reference key="1">
    <citation type="journal article" date="2005" name="Proc. Natl. Acad. Sci. U.S.A.">
        <title>Whole genome sequence of Staphylococcus saprophyticus reveals the pathogenesis of uncomplicated urinary tract infection.</title>
        <authorList>
            <person name="Kuroda M."/>
            <person name="Yamashita A."/>
            <person name="Hirakawa H."/>
            <person name="Kumano M."/>
            <person name="Morikawa K."/>
            <person name="Higashide M."/>
            <person name="Maruyama A."/>
            <person name="Inose Y."/>
            <person name="Matoba K."/>
            <person name="Toh H."/>
            <person name="Kuhara S."/>
            <person name="Hattori M."/>
            <person name="Ohta T."/>
        </authorList>
    </citation>
    <scope>NUCLEOTIDE SEQUENCE [LARGE SCALE GENOMIC DNA]</scope>
    <source>
        <strain>ATCC 15305 / DSM 20229 / NCIMB 8711 / NCTC 7292 / S-41</strain>
    </source>
</reference>
<protein>
    <recommendedName>
        <fullName evidence="1">Redox-sensing transcriptional repressor Rex</fullName>
    </recommendedName>
</protein>
<feature type="chain" id="PRO_0000097912" description="Redox-sensing transcriptional repressor Rex">
    <location>
        <begin position="1"/>
        <end position="213"/>
    </location>
</feature>
<feature type="DNA-binding region" description="H-T-H motif" evidence="1">
    <location>
        <begin position="18"/>
        <end position="57"/>
    </location>
</feature>
<feature type="binding site" evidence="1">
    <location>
        <begin position="92"/>
        <end position="97"/>
    </location>
    <ligand>
        <name>NAD(+)</name>
        <dbReference type="ChEBI" id="CHEBI:57540"/>
    </ligand>
</feature>
<proteinExistence type="inferred from homology"/>
<name>REX_STAS1</name>
<accession>Q49Z00</accession>
<keyword id="KW-0963">Cytoplasm</keyword>
<keyword id="KW-0238">DNA-binding</keyword>
<keyword id="KW-0520">NAD</keyword>
<keyword id="KW-1185">Reference proteome</keyword>
<keyword id="KW-0678">Repressor</keyword>
<keyword id="KW-0804">Transcription</keyword>
<keyword id="KW-0805">Transcription regulation</keyword>
<organism>
    <name type="scientific">Staphylococcus saprophyticus subsp. saprophyticus (strain ATCC 15305 / DSM 20229 / NCIMB 8711 / NCTC 7292 / S-41)</name>
    <dbReference type="NCBI Taxonomy" id="342451"/>
    <lineage>
        <taxon>Bacteria</taxon>
        <taxon>Bacillati</taxon>
        <taxon>Bacillota</taxon>
        <taxon>Bacilli</taxon>
        <taxon>Bacillales</taxon>
        <taxon>Staphylococcaceae</taxon>
        <taxon>Staphylococcus</taxon>
    </lineage>
</organism>
<comment type="function">
    <text evidence="1">Modulates transcription in response to changes in cellular NADH/NAD(+) redox state.</text>
</comment>
<comment type="subunit">
    <text evidence="1">Homodimer.</text>
</comment>
<comment type="subcellular location">
    <subcellularLocation>
        <location evidence="1">Cytoplasm</location>
    </subcellularLocation>
</comment>
<comment type="similarity">
    <text evidence="1">Belongs to the transcriptional regulatory Rex family.</text>
</comment>
<dbReference type="EMBL" id="AP008934">
    <property type="protein sequence ID" value="BAE17978.1"/>
    <property type="molecule type" value="Genomic_DNA"/>
</dbReference>
<dbReference type="RefSeq" id="WP_011302723.1">
    <property type="nucleotide sequence ID" value="NZ_MTGA01000028.1"/>
</dbReference>
<dbReference type="SMR" id="Q49Z00"/>
<dbReference type="KEGG" id="ssp:SSP0833"/>
<dbReference type="eggNOG" id="COG2344">
    <property type="taxonomic scope" value="Bacteria"/>
</dbReference>
<dbReference type="HOGENOM" id="CLU_061534_1_1_9"/>
<dbReference type="Proteomes" id="UP000006371">
    <property type="component" value="Chromosome"/>
</dbReference>
<dbReference type="GO" id="GO:0005737">
    <property type="term" value="C:cytoplasm"/>
    <property type="evidence" value="ECO:0007669"/>
    <property type="project" value="UniProtKB-SubCell"/>
</dbReference>
<dbReference type="GO" id="GO:0003677">
    <property type="term" value="F:DNA binding"/>
    <property type="evidence" value="ECO:0007669"/>
    <property type="project" value="UniProtKB-UniRule"/>
</dbReference>
<dbReference type="GO" id="GO:0003700">
    <property type="term" value="F:DNA-binding transcription factor activity"/>
    <property type="evidence" value="ECO:0007669"/>
    <property type="project" value="UniProtKB-UniRule"/>
</dbReference>
<dbReference type="GO" id="GO:0045892">
    <property type="term" value="P:negative regulation of DNA-templated transcription"/>
    <property type="evidence" value="ECO:0007669"/>
    <property type="project" value="InterPro"/>
</dbReference>
<dbReference type="GO" id="GO:0051775">
    <property type="term" value="P:response to redox state"/>
    <property type="evidence" value="ECO:0007669"/>
    <property type="project" value="InterPro"/>
</dbReference>
<dbReference type="Gene3D" id="3.40.50.720">
    <property type="entry name" value="NAD(P)-binding Rossmann-like Domain"/>
    <property type="match status" value="1"/>
</dbReference>
<dbReference type="Gene3D" id="1.10.10.10">
    <property type="entry name" value="Winged helix-like DNA-binding domain superfamily/Winged helix DNA-binding domain"/>
    <property type="match status" value="1"/>
</dbReference>
<dbReference type="HAMAP" id="MF_01131">
    <property type="entry name" value="Rex"/>
    <property type="match status" value="1"/>
</dbReference>
<dbReference type="InterPro" id="IPR003781">
    <property type="entry name" value="CoA-bd"/>
</dbReference>
<dbReference type="InterPro" id="IPR036291">
    <property type="entry name" value="NAD(P)-bd_dom_sf"/>
</dbReference>
<dbReference type="InterPro" id="IPR009718">
    <property type="entry name" value="Rex_DNA-bd_C_dom"/>
</dbReference>
<dbReference type="InterPro" id="IPR022876">
    <property type="entry name" value="Tscrpt_rep_Rex"/>
</dbReference>
<dbReference type="InterPro" id="IPR036388">
    <property type="entry name" value="WH-like_DNA-bd_sf"/>
</dbReference>
<dbReference type="InterPro" id="IPR036390">
    <property type="entry name" value="WH_DNA-bd_sf"/>
</dbReference>
<dbReference type="NCBIfam" id="NF003989">
    <property type="entry name" value="PRK05472.1-3"/>
    <property type="match status" value="1"/>
</dbReference>
<dbReference type="NCBIfam" id="NF003991">
    <property type="entry name" value="PRK05472.1-5"/>
    <property type="match status" value="1"/>
</dbReference>
<dbReference type="NCBIfam" id="NF003994">
    <property type="entry name" value="PRK05472.2-3"/>
    <property type="match status" value="1"/>
</dbReference>
<dbReference type="NCBIfam" id="NF003995">
    <property type="entry name" value="PRK05472.2-4"/>
    <property type="match status" value="1"/>
</dbReference>
<dbReference type="NCBIfam" id="NF003996">
    <property type="entry name" value="PRK05472.2-5"/>
    <property type="match status" value="1"/>
</dbReference>
<dbReference type="PANTHER" id="PTHR35786">
    <property type="entry name" value="REDOX-SENSING TRANSCRIPTIONAL REPRESSOR REX"/>
    <property type="match status" value="1"/>
</dbReference>
<dbReference type="PANTHER" id="PTHR35786:SF1">
    <property type="entry name" value="REDOX-SENSING TRANSCRIPTIONAL REPRESSOR REX 1"/>
    <property type="match status" value="1"/>
</dbReference>
<dbReference type="Pfam" id="PF02629">
    <property type="entry name" value="CoA_binding"/>
    <property type="match status" value="1"/>
</dbReference>
<dbReference type="Pfam" id="PF06971">
    <property type="entry name" value="Put_DNA-bind_N"/>
    <property type="match status" value="1"/>
</dbReference>
<dbReference type="SMART" id="SM00881">
    <property type="entry name" value="CoA_binding"/>
    <property type="match status" value="1"/>
</dbReference>
<dbReference type="SUPFAM" id="SSF51735">
    <property type="entry name" value="NAD(P)-binding Rossmann-fold domains"/>
    <property type="match status" value="1"/>
</dbReference>
<dbReference type="SUPFAM" id="SSF46785">
    <property type="entry name" value="Winged helix' DNA-binding domain"/>
    <property type="match status" value="1"/>
</dbReference>
<gene>
    <name evidence="1" type="primary">rex</name>
    <name type="ordered locus">SSP0833</name>
</gene>
<sequence>MANQSEKIPRATLKRLPLYYRFVNTLKSKGIDRVNSKAISEGLNIDSATIRRDFSYFGELGKKGYGYNIDSLLHFFKNEISENDEIKIAIVGVGNLGKALLTYNFSIHDEMTITEAFDIREEVIGTQIGKVTVSPFEKITDILSHEQIDVVILTTPEEAAQKVADTLVKAGVKGILNFTPSRVQTPSDVQVHHIDLGIELQSLLFFMKNYSHK</sequence>